<accession>P17411</accession>
<accession>P37795</accession>
<accession>P78290</accession>
<reference key="1">
    <citation type="journal article" date="1990" name="Genetics">
        <title>Characterization and nucleotide sequence of the cryptic cel operon of Escherichia coli K12.</title>
        <authorList>
            <person name="Parker L.L."/>
            <person name="Hall B.G."/>
        </authorList>
    </citation>
    <scope>NUCLEOTIDE SEQUENCE [GENOMIC DNA]</scope>
    <source>
        <strain>K12</strain>
    </source>
</reference>
<reference key="2">
    <citation type="journal article" date="1996" name="DNA Res.">
        <title>A 570-kb DNA sequence of the Escherichia coli K-12 genome corresponding to the 28.0-40.1 min region on the linkage map.</title>
        <authorList>
            <person name="Aiba H."/>
            <person name="Baba T."/>
            <person name="Fujita K."/>
            <person name="Hayashi K."/>
            <person name="Inada T."/>
            <person name="Isono K."/>
            <person name="Itoh T."/>
            <person name="Kasai H."/>
            <person name="Kashimoto K."/>
            <person name="Kimura S."/>
            <person name="Kitakawa M."/>
            <person name="Kitagawa M."/>
            <person name="Makino K."/>
            <person name="Miki T."/>
            <person name="Mizobuchi K."/>
            <person name="Mori H."/>
            <person name="Mori T."/>
            <person name="Motomura K."/>
            <person name="Nakade S."/>
            <person name="Nakamura Y."/>
            <person name="Nashimoto H."/>
            <person name="Nishio Y."/>
            <person name="Oshima T."/>
            <person name="Saito N."/>
            <person name="Sampei G."/>
            <person name="Seki Y."/>
            <person name="Sivasundaram S."/>
            <person name="Tagami H."/>
            <person name="Takeda J."/>
            <person name="Takemoto K."/>
            <person name="Takeuchi Y."/>
            <person name="Wada C."/>
            <person name="Yamamoto Y."/>
            <person name="Horiuchi T."/>
        </authorList>
    </citation>
    <scope>NUCLEOTIDE SEQUENCE [LARGE SCALE GENOMIC DNA]</scope>
    <source>
        <strain>K12 / W3110 / ATCC 27325 / DSM 5911</strain>
    </source>
</reference>
<reference key="3">
    <citation type="journal article" date="1997" name="Science">
        <title>The complete genome sequence of Escherichia coli K-12.</title>
        <authorList>
            <person name="Blattner F.R."/>
            <person name="Plunkett G. III"/>
            <person name="Bloch C.A."/>
            <person name="Perna N.T."/>
            <person name="Burland V."/>
            <person name="Riley M."/>
            <person name="Collado-Vides J."/>
            <person name="Glasner J.D."/>
            <person name="Rode C.K."/>
            <person name="Mayhew G.F."/>
            <person name="Gregor J."/>
            <person name="Davis N.W."/>
            <person name="Kirkpatrick H.A."/>
            <person name="Goeden M.A."/>
            <person name="Rose D.J."/>
            <person name="Mau B."/>
            <person name="Shao Y."/>
        </authorList>
    </citation>
    <scope>NUCLEOTIDE SEQUENCE [LARGE SCALE GENOMIC DNA]</scope>
    <source>
        <strain>K12 / MG1655 / ATCC 47076</strain>
    </source>
</reference>
<reference key="4">
    <citation type="journal article" date="2006" name="Mol. Syst. Biol.">
        <title>Highly accurate genome sequences of Escherichia coli K-12 strains MG1655 and W3110.</title>
        <authorList>
            <person name="Hayashi K."/>
            <person name="Morooka N."/>
            <person name="Yamamoto Y."/>
            <person name="Fujita K."/>
            <person name="Isono K."/>
            <person name="Choi S."/>
            <person name="Ohtsubo E."/>
            <person name="Baba T."/>
            <person name="Wanner B.L."/>
            <person name="Mori H."/>
            <person name="Horiuchi T."/>
        </authorList>
    </citation>
    <scope>NUCLEOTIDE SEQUENCE [LARGE SCALE GENOMIC DNA]</scope>
    <source>
        <strain>K12 / W3110 / ATCC 27325 / DSM 5911</strain>
    </source>
</reference>
<reference key="5">
    <citation type="journal article" date="1994" name="Mol. Gen. Genet.">
        <title>A luxAB transcriptional fusion to the cryptic celF gene of Escherichia coli displays increased luminescence in the presence of nickel.</title>
        <authorList>
            <person name="Guzzo A."/>
            <person name="Dubow M.S."/>
        </authorList>
    </citation>
    <scope>NUCLEOTIDE SEQUENCE [GENOMIC DNA] OF 362-450</scope>
    <source>
        <strain>K12</strain>
    </source>
</reference>
<reference key="6">
    <citation type="journal article" date="1999" name="J. Bacteriol.">
        <title>Cellobiose-6-phosphate hydrolase (CelF) of Escherichia coli: characterization and assignment to the unusual family 4 of glycosylhydrolases.</title>
        <authorList>
            <person name="Thompson J."/>
            <person name="Ruvinov S.B."/>
            <person name="Freedberg D.I."/>
            <person name="Hall B.G."/>
        </authorList>
    </citation>
    <scope>PROTEIN SEQUENCE OF 2-31</scope>
    <scope>MASS SPECTROMETRY</scope>
    <scope>FUNCTION</scope>
    <scope>CATALYTIC ACTIVITY</scope>
    <scope>COFACTOR</scope>
    <scope>BIOPHYSICOCHEMICAL PROPERTIES</scope>
    <scope>SUBUNIT</scope>
</reference>
<reference key="7">
    <citation type="journal article" date="1997" name="Proc. Natl. Acad. Sci. U.S.A.">
        <title>Wild-type Escherichia coli grows on the chitin disaccharide, N,N'-diacetylchitobiose, by expressing the cel operon.</title>
        <authorList>
            <person name="Keyhani N.O."/>
            <person name="Roseman S."/>
        </authorList>
    </citation>
    <scope>IDENTIFICATION OF CHB OPERON</scope>
</reference>
<reference key="8">
    <citation type="journal article" date="2000" name="J. Biol. Chem.">
        <title>The chitin disaccharide, N,N'-diacetylchitobiose, is catabolized by Escherichia coli and is transported/phosphorylated by the phosphoenolpyruvate:glycose phosphotransferase system.</title>
        <authorList>
            <person name="Keyhani N.O."/>
            <person name="Wang L.-X."/>
            <person name="Lee Y.C."/>
            <person name="Roseman S."/>
        </authorList>
    </citation>
    <scope>FUNCTION</scope>
</reference>
<keyword id="KW-0119">Carbohydrate metabolism</keyword>
<keyword id="KW-0170">Cobalt</keyword>
<keyword id="KW-0903">Direct protein sequencing</keyword>
<keyword id="KW-0326">Glycosidase</keyword>
<keyword id="KW-0378">Hydrolase</keyword>
<keyword id="KW-0464">Manganese</keyword>
<keyword id="KW-0479">Metal-binding</keyword>
<keyword id="KW-0520">NAD</keyword>
<keyword id="KW-0533">Nickel</keyword>
<keyword id="KW-1185">Reference proteome</keyword>
<dbReference type="EC" id="3.2.1.86" evidence="2"/>
<dbReference type="EMBL" id="X52890">
    <property type="protein sequence ID" value="CAA37073.1"/>
    <property type="status" value="ALT_FRAME"/>
    <property type="molecule type" value="Genomic_DNA"/>
</dbReference>
<dbReference type="EMBL" id="U00096">
    <property type="protein sequence ID" value="AAC74804.1"/>
    <property type="molecule type" value="Genomic_DNA"/>
</dbReference>
<dbReference type="EMBL" id="AP009048">
    <property type="protein sequence ID" value="BAA15515.1"/>
    <property type="molecule type" value="Genomic_DNA"/>
</dbReference>
<dbReference type="EMBL" id="X66725">
    <property type="protein sequence ID" value="CAA47257.1"/>
    <property type="status" value="ALT_FRAME"/>
    <property type="molecule type" value="Genomic_DNA"/>
</dbReference>
<dbReference type="EMBL" id="X66725">
    <property type="protein sequence ID" value="CAA47259.1"/>
    <property type="status" value="ALT_FRAME"/>
    <property type="molecule type" value="Genomic_DNA"/>
</dbReference>
<dbReference type="PIR" id="F64932">
    <property type="entry name" value="F64932"/>
</dbReference>
<dbReference type="RefSeq" id="NP_416248.1">
    <property type="nucleotide sequence ID" value="NC_000913.3"/>
</dbReference>
<dbReference type="RefSeq" id="WP_000078765.1">
    <property type="nucleotide sequence ID" value="NZ_LN832404.1"/>
</dbReference>
<dbReference type="SMR" id="P17411"/>
<dbReference type="BioGRID" id="4259132">
    <property type="interactions" value="404"/>
</dbReference>
<dbReference type="FunCoup" id="P17411">
    <property type="interactions" value="120"/>
</dbReference>
<dbReference type="IntAct" id="P17411">
    <property type="interactions" value="4"/>
</dbReference>
<dbReference type="STRING" id="511145.b1734"/>
<dbReference type="CAZy" id="GH4">
    <property type="family name" value="Glycoside Hydrolase Family 4"/>
</dbReference>
<dbReference type="PaxDb" id="511145-b1734"/>
<dbReference type="EnsemblBacteria" id="AAC74804">
    <property type="protein sequence ID" value="AAC74804"/>
    <property type="gene ID" value="b1734"/>
</dbReference>
<dbReference type="GeneID" id="946266"/>
<dbReference type="KEGG" id="ecj:JW1723"/>
<dbReference type="KEGG" id="eco:b1734"/>
<dbReference type="KEGG" id="ecoc:C3026_09910"/>
<dbReference type="PATRIC" id="fig|1411691.4.peg.522"/>
<dbReference type="EchoBASE" id="EB0142"/>
<dbReference type="eggNOG" id="COG1486">
    <property type="taxonomic scope" value="Bacteria"/>
</dbReference>
<dbReference type="HOGENOM" id="CLU_045951_0_1_6"/>
<dbReference type="InParanoid" id="P17411"/>
<dbReference type="OMA" id="NEHASHI"/>
<dbReference type="OrthoDB" id="9767022at2"/>
<dbReference type="PhylomeDB" id="P17411"/>
<dbReference type="BioCyc" id="EcoCyc:EG10144-MONOMER"/>
<dbReference type="BioCyc" id="MetaCyc:EG10144-MONOMER"/>
<dbReference type="BRENDA" id="3.2.1.86">
    <property type="organism ID" value="2026"/>
</dbReference>
<dbReference type="SABIO-RK" id="P17411"/>
<dbReference type="PRO" id="PR:P17411"/>
<dbReference type="Proteomes" id="UP000000625">
    <property type="component" value="Chromosome"/>
</dbReference>
<dbReference type="GO" id="GO:0005829">
    <property type="term" value="C:cytosol"/>
    <property type="evidence" value="ECO:0000318"/>
    <property type="project" value="GO_Central"/>
</dbReference>
<dbReference type="GO" id="GO:0008706">
    <property type="term" value="F:6-phospho-beta-glucosidase activity"/>
    <property type="evidence" value="ECO:0000314"/>
    <property type="project" value="EcoCyc"/>
</dbReference>
<dbReference type="GO" id="GO:0042802">
    <property type="term" value="F:identical protein binding"/>
    <property type="evidence" value="ECO:0000314"/>
    <property type="project" value="EcoCyc"/>
</dbReference>
<dbReference type="GO" id="GO:0046872">
    <property type="term" value="F:metal ion binding"/>
    <property type="evidence" value="ECO:0007669"/>
    <property type="project" value="UniProtKB-KW"/>
</dbReference>
<dbReference type="GO" id="GO:0016616">
    <property type="term" value="F:oxidoreductase activity, acting on the CH-OH group of donors, NAD or NADP as acceptor"/>
    <property type="evidence" value="ECO:0007669"/>
    <property type="project" value="InterPro"/>
</dbReference>
<dbReference type="GO" id="GO:0005975">
    <property type="term" value="P:carbohydrate metabolic process"/>
    <property type="evidence" value="ECO:0007669"/>
    <property type="project" value="InterPro"/>
</dbReference>
<dbReference type="GO" id="GO:0052777">
    <property type="term" value="P:diacetylchitobiose catabolic process"/>
    <property type="evidence" value="ECO:0000315"/>
    <property type="project" value="EcoCyc"/>
</dbReference>
<dbReference type="CDD" id="cd05296">
    <property type="entry name" value="GH4_P_beta_glucosidase"/>
    <property type="match status" value="1"/>
</dbReference>
<dbReference type="FunFam" id="3.40.50.720:FF:000163">
    <property type="entry name" value="6-phospho-beta-glucosidase"/>
    <property type="match status" value="1"/>
</dbReference>
<dbReference type="Gene3D" id="3.90.110.10">
    <property type="entry name" value="Lactate dehydrogenase/glycoside hydrolase, family 4, C-terminal"/>
    <property type="match status" value="1"/>
</dbReference>
<dbReference type="Gene3D" id="3.40.50.720">
    <property type="entry name" value="NAD(P)-binding Rossmann-like Domain"/>
    <property type="match status" value="1"/>
</dbReference>
<dbReference type="InterPro" id="IPR019802">
    <property type="entry name" value="GlycHydrolase_4_CS"/>
</dbReference>
<dbReference type="InterPro" id="IPR001088">
    <property type="entry name" value="Glyco_hydro_4"/>
</dbReference>
<dbReference type="InterPro" id="IPR022616">
    <property type="entry name" value="Glyco_hydro_4_C"/>
</dbReference>
<dbReference type="InterPro" id="IPR015955">
    <property type="entry name" value="Lactate_DH/Glyco_Ohase_4_C"/>
</dbReference>
<dbReference type="InterPro" id="IPR036291">
    <property type="entry name" value="NAD(P)-bd_dom_sf"/>
</dbReference>
<dbReference type="PANTHER" id="PTHR32092:SF5">
    <property type="entry name" value="6-PHOSPHO-BETA-GLUCOSIDASE"/>
    <property type="match status" value="1"/>
</dbReference>
<dbReference type="PANTHER" id="PTHR32092">
    <property type="entry name" value="6-PHOSPHO-BETA-GLUCOSIDASE-RELATED"/>
    <property type="match status" value="1"/>
</dbReference>
<dbReference type="Pfam" id="PF02056">
    <property type="entry name" value="Glyco_hydro_4"/>
    <property type="match status" value="1"/>
</dbReference>
<dbReference type="Pfam" id="PF11975">
    <property type="entry name" value="Glyco_hydro_4C"/>
    <property type="match status" value="1"/>
</dbReference>
<dbReference type="PRINTS" id="PR00732">
    <property type="entry name" value="GLHYDRLASE4"/>
</dbReference>
<dbReference type="SUPFAM" id="SSF56327">
    <property type="entry name" value="LDH C-terminal domain-like"/>
    <property type="match status" value="1"/>
</dbReference>
<dbReference type="SUPFAM" id="SSF51735">
    <property type="entry name" value="NAD(P)-binding Rossmann-fold domains"/>
    <property type="match status" value="1"/>
</dbReference>
<dbReference type="PROSITE" id="PS01324">
    <property type="entry name" value="GLYCOSYL_HYDROL_F4"/>
    <property type="match status" value="1"/>
</dbReference>
<sequence length="450" mass="50513">MSQKLKVVTIGGGSSYTPELLEGFIKRYHELPVSELWLVDVEGGKPKLDIIFDLCQRMIDNAGVPMKLYKTLDRREALKDADFVTTQLRVGQLPARELDERIPLSHGYLGQETNGAGGLFKGLRTIPVIFDIVKDVEELCPNAWVINFTNPAGMVTEAVYRHTGFKRFIGVCNIPIGMKMFIRDVLMLKDSDDLSIDLFGLNHMVFIKDVLINGKSRFAELLDGVASGQLKASSVKNIFDLPFSEGLIRSLNLLPCSYLLYYFKQKEMLAIEMGEYYKGGARAQVVQKVEKQLFELYKNPELKVKPKELEQRGGAYYSDAACEVINAIYNDKQAEHYVNIPHHGQIDNIPADWAVEMTCKLGRDGATPHPRITHFDDKVMGLIHTIKGFEIAASNAALSGEFNDVLLALNLSPLVHSDRDAELLAREMILAHEKWLPNFADCIAELKKAH</sequence>
<comment type="function">
    <text evidence="2 3">Hydrolyzes a wide variety of P-beta-glucosides including cellobiose-6P, salicin-6P, arbutin-6P, gentiobiose-6P, methyl-beta-glucoside-6P and p-nitrophenyl-beta-D-glucopyranoside-6P. Is also able to hydrolyze phospho-N,N'-diacetylchitobiose.</text>
</comment>
<comment type="catalytic activity">
    <reaction evidence="2">
        <text>6-phospho-beta-D-glucosyl-(1-&gt;4)-D-glucose + H2O = D-glucose 6-phosphate + D-glucose</text>
        <dbReference type="Rhea" id="RHEA:10772"/>
        <dbReference type="ChEBI" id="CHEBI:4167"/>
        <dbReference type="ChEBI" id="CHEBI:15377"/>
        <dbReference type="ChEBI" id="CHEBI:58312"/>
        <dbReference type="ChEBI" id="CHEBI:61548"/>
        <dbReference type="EC" id="3.2.1.86"/>
    </reaction>
    <physiologicalReaction direction="left-to-right" evidence="2">
        <dbReference type="Rhea" id="RHEA:10773"/>
    </physiologicalReaction>
</comment>
<comment type="cofactor">
    <cofactor evidence="2">
        <name>NAD(+)</name>
        <dbReference type="ChEBI" id="CHEBI:57540"/>
    </cofactor>
</comment>
<comment type="cofactor">
    <cofactor evidence="2">
        <name>Mn(2+)</name>
        <dbReference type="ChEBI" id="CHEBI:29035"/>
    </cofactor>
    <cofactor evidence="2">
        <name>Co(2+)</name>
        <dbReference type="ChEBI" id="CHEBI:48828"/>
    </cofactor>
    <cofactor evidence="2">
        <name>Ni(2+)</name>
        <dbReference type="ChEBI" id="CHEBI:49786"/>
    </cofactor>
    <text evidence="2">Divalent metal ion. Manganese, cobalt and nickel ions enhance activity whereas magnesium, calcium, strontium and zinc ions do not.</text>
</comment>
<comment type="biophysicochemical properties">
    <kinetics>
        <KM evidence="2">1.3 mM for cellobiose-6P</KM>
        <KM evidence="2">0.44 mM for salicin-6P</KM>
        <KM evidence="2">0.35 mM for arbutin-6P</KM>
        <KM evidence="2">12.5 mM for gentiobiose-6P</KM>
        <KM evidence="2">2.22 mM for methyl-beta-glucoside-6P</KM>
        <KM evidence="2">0.44 mM for p-nitrophenyl-beta-D-glucopyranoside-6P</KM>
        <Vmax evidence="2">1.74 umol/min/mg enzyme toward cellobiose-6P</Vmax>
        <Vmax evidence="2">1.38 umol/min/mg enzyme toward salicin-6P</Vmax>
        <Vmax evidence="2">2.13 umol/min/mg enzyme toward arbutin-6P</Vmax>
        <Vmax evidence="2">1.11 umol/min/mg enzyme toward gentiobiose-6P</Vmax>
        <Vmax evidence="2">0.56 umol/min/mg enzyme toward methyl-beta-glucoside-6P</Vmax>
        <Vmax evidence="2">1.33 umol/min/mg enzyme toward p-nitrophenyl-beta-D-glucopyranoside-6P</Vmax>
    </kinetics>
</comment>
<comment type="subunit">
    <text evidence="2">Homotetramer.</text>
</comment>
<comment type="induction">
    <text>By N,N'-diacetylchitobiose.</text>
</comment>
<comment type="mass spectrometry" mass="50386.0" method="Electrospray" evidence="2"/>
<comment type="similarity">
    <text evidence="4">Belongs to the glycosyl hydrolase 4 family.</text>
</comment>
<comment type="caution">
    <text evidence="5">Was originally (PubMed:2179047) characterized as part of a cryptic cel operon for a cellobiose degradation system. The Cel+ phenotype is due to mutations making expression chitobiose-independent and altering the substrate specificity.</text>
</comment>
<comment type="sequence caution" evidence="4">
    <conflict type="frameshift">
        <sequence resource="EMBL-CDS" id="CAA37073"/>
    </conflict>
</comment>
<comment type="sequence caution" evidence="4">
    <conflict type="frameshift">
        <sequence resource="EMBL-CDS" id="CAA47257"/>
    </conflict>
</comment>
<comment type="sequence caution" evidence="4">
    <conflict type="frameshift">
        <sequence resource="EMBL-CDS" id="CAA47259"/>
    </conflict>
</comment>
<evidence type="ECO:0000250" key="1"/>
<evidence type="ECO:0000269" key="2">
    <source>
    </source>
</evidence>
<evidence type="ECO:0000269" key="3">
    <source>
    </source>
</evidence>
<evidence type="ECO:0000305" key="4"/>
<evidence type="ECO:0000305" key="5">
    <source>
    </source>
</evidence>
<gene>
    <name type="primary">chbF</name>
    <name type="synonym">celF</name>
    <name type="synonym">ydjD</name>
    <name type="ordered locus">b1734</name>
    <name type="ordered locus">JW1723</name>
</gene>
<name>CHBF_ECOLI</name>
<organism>
    <name type="scientific">Escherichia coli (strain K12)</name>
    <dbReference type="NCBI Taxonomy" id="83333"/>
    <lineage>
        <taxon>Bacteria</taxon>
        <taxon>Pseudomonadati</taxon>
        <taxon>Pseudomonadota</taxon>
        <taxon>Gammaproteobacteria</taxon>
        <taxon>Enterobacterales</taxon>
        <taxon>Enterobacteriaceae</taxon>
        <taxon>Escherichia</taxon>
    </lineage>
</organism>
<feature type="initiator methionine" description="Removed" evidence="2">
    <location>
        <position position="1"/>
    </location>
</feature>
<feature type="chain" id="PRO_0000169858" description="6-phospho-beta-glucosidase">
    <location>
        <begin position="2"/>
        <end position="450"/>
    </location>
</feature>
<feature type="active site" description="Proton acceptor" evidence="1">
    <location>
        <position position="258"/>
    </location>
</feature>
<feature type="binding site" evidence="1">
    <location>
        <begin position="5"/>
        <end position="73"/>
    </location>
    <ligand>
        <name>NAD(+)</name>
        <dbReference type="ChEBI" id="CHEBI:57540"/>
    </ligand>
</feature>
<feature type="binding site" evidence="1">
    <location>
        <position position="96"/>
    </location>
    <ligand>
        <name>substrate</name>
    </ligand>
</feature>
<feature type="binding site" evidence="1">
    <location>
        <position position="150"/>
    </location>
    <ligand>
        <name>substrate</name>
    </ligand>
</feature>
<feature type="binding site" evidence="1">
    <location>
        <position position="172"/>
    </location>
    <ligand>
        <name>Mn(2+)</name>
        <dbReference type="ChEBI" id="CHEBI:29035"/>
    </ligand>
</feature>
<feature type="binding site" evidence="1">
    <location>
        <position position="203"/>
    </location>
    <ligand>
        <name>Mn(2+)</name>
        <dbReference type="ChEBI" id="CHEBI:29035"/>
    </ligand>
</feature>
<feature type="site" description="Increases basicity of active site Tyr" evidence="1">
    <location>
        <position position="112"/>
    </location>
</feature>
<proteinExistence type="evidence at protein level"/>
<protein>
    <recommendedName>
        <fullName>6-phospho-beta-glucosidase</fullName>
        <ecNumber evidence="2">3.2.1.86</ecNumber>
    </recommendedName>
    <alternativeName>
        <fullName>Cellobiose-6-phosphate hydrolase</fullName>
    </alternativeName>
    <alternativeName>
        <fullName>Phospho-chitobiase</fullName>
    </alternativeName>
</protein>